<reference key="1">
    <citation type="journal article" date="1999" name="Eur. J. Biochem.">
        <title>Methanobacterium thermoautotrophicum encodes two multisubunit membrane-bound [NiFe] hydrogenases. Transcription of the operons and sequence analysis of the deduced proteins.</title>
        <authorList>
            <person name="Tersteegen A."/>
            <person name="Hedderich R."/>
        </authorList>
    </citation>
    <scope>NUCLEOTIDE SEQUENCE [GENOMIC DNA]</scope>
    <scope>EXPRESSION</scope>
    <source>
        <strain>ATCC BAA-927 / DSM 2133 / JCM 14651 / NBRC 100331 / OCM 82 / Marburg</strain>
    </source>
</reference>
<reference key="2">
    <citation type="journal article" date="2010" name="J. Bacteriol.">
        <title>Complete genome sequence of Methanothermobacter marburgensis, a methanoarchaeon model organism.</title>
        <authorList>
            <person name="Liesegang H."/>
            <person name="Kaster A.K."/>
            <person name="Wiezer A."/>
            <person name="Goenrich M."/>
            <person name="Wollherr A."/>
            <person name="Seedorf H."/>
            <person name="Gottschalk G."/>
            <person name="Thauer R.K."/>
        </authorList>
    </citation>
    <scope>NUCLEOTIDE SEQUENCE [LARGE SCALE GENOMIC DNA]</scope>
    <source>
        <strain>ATCC BAA-927 / DSM 2133 / JCM 14651 / NBRC 100331 / OCM 82 / Marburg</strain>
    </source>
</reference>
<evidence type="ECO:0000255" key="1"/>
<evidence type="ECO:0000305" key="2"/>
<dbReference type="EMBL" id="AJ243655">
    <property type="protein sequence ID" value="CAB52756.1"/>
    <property type="molecule type" value="Genomic_DNA"/>
</dbReference>
<dbReference type="EMBL" id="CP001710">
    <property type="protein sequence ID" value="ADL58379.1"/>
    <property type="status" value="ALT_INIT"/>
    <property type="molecule type" value="Genomic_DNA"/>
</dbReference>
<dbReference type="RefSeq" id="WP_238523403.1">
    <property type="nucleotide sequence ID" value="NC_014408.1"/>
</dbReference>
<dbReference type="STRING" id="79929.MTBMA_c07840"/>
<dbReference type="PaxDb" id="79929-MTBMA_c07840"/>
<dbReference type="GeneID" id="77399563"/>
<dbReference type="KEGG" id="mmg:MTBMA_c07840"/>
<dbReference type="HOGENOM" id="CLU_174516_0_0_2"/>
<dbReference type="Proteomes" id="UP000000345">
    <property type="component" value="Chromosome"/>
</dbReference>
<dbReference type="GO" id="GO:0005886">
    <property type="term" value="C:plasma membrane"/>
    <property type="evidence" value="ECO:0007669"/>
    <property type="project" value="UniProtKB-SubCell"/>
</dbReference>
<dbReference type="InterPro" id="IPR011306">
    <property type="entry name" value="Prd_NiFe_hyd_3_EhaA"/>
</dbReference>
<dbReference type="Pfam" id="PF17367">
    <property type="entry name" value="NiFe_hyd_3_EhaA"/>
    <property type="match status" value="1"/>
</dbReference>
<dbReference type="PIRSF" id="PIRSF005019">
    <property type="entry name" value="EhaA"/>
    <property type="match status" value="1"/>
</dbReference>
<feature type="chain" id="PRO_0000138111" description="Probable [NiFe]-hydrogenase-type-3 Eha complex membrane subunit A">
    <location>
        <begin position="1"/>
        <end position="98"/>
    </location>
</feature>
<feature type="transmembrane region" description="Helical" evidence="1">
    <location>
        <begin position="7"/>
        <end position="27"/>
    </location>
</feature>
<feature type="transmembrane region" description="Helical" evidence="1">
    <location>
        <begin position="43"/>
        <end position="63"/>
    </location>
</feature>
<feature type="transmembrane region" description="Helical" evidence="1">
    <location>
        <begin position="72"/>
        <end position="92"/>
    </location>
</feature>
<gene>
    <name type="primary">ehaA</name>
    <name type="ordered locus">MTBMA_c07840</name>
</gene>
<name>EHAA_METTM</name>
<sequence>MIIHVTYLSGYITGIISSIIISAILGLPLAPERPARHSWTPSAIFPAPIIAMGLVAICIKLGVTGMYGGVDLGVVSGLLAALMTAYFLEDIFPRPEDL</sequence>
<keyword id="KW-1003">Cell membrane</keyword>
<keyword id="KW-0472">Membrane</keyword>
<keyword id="KW-0812">Transmembrane</keyword>
<keyword id="KW-1133">Transmembrane helix</keyword>
<proteinExistence type="inferred from homology"/>
<accession>Q9UXQ8</accession>
<accession>D9PVY1</accession>
<protein>
    <recommendedName>
        <fullName>Probable [NiFe]-hydrogenase-type-3 Eha complex membrane subunit A</fullName>
    </recommendedName>
</protein>
<comment type="function">
    <text evidence="2">One of the integral membrane subunits of multisubunit membrane-bound [NiFe]-hydrogenase eha. Eha is predicted to form large electron transfer complex and might catalyze energy-driven reduction of low-potential redox carriers (Potential).</text>
</comment>
<comment type="subunit">
    <text>Putative multisubunit membrane-bound [NiFe]-hydrogenase eha is composed of at least 20 subunits.</text>
</comment>
<comment type="subcellular location">
    <subcellularLocation>
        <location evidence="2">Cell membrane</location>
        <topology evidence="2">Multi-pass membrane protein</topology>
    </subcellularLocation>
</comment>
<comment type="similarity">
    <text evidence="2">Belongs to the EhaA family.</text>
</comment>
<comment type="sequence caution" evidence="2">
    <conflict type="erroneous initiation">
        <sequence resource="EMBL-CDS" id="ADL58379"/>
    </conflict>
    <text>Extended N-terminus.</text>
</comment>
<organism>
    <name type="scientific">Methanothermobacter marburgensis (strain ATCC BAA-927 / DSM 2133 / JCM 14651 / NBRC 100331 / OCM 82 / Marburg)</name>
    <name type="common">Methanobacterium thermoautotrophicum</name>
    <dbReference type="NCBI Taxonomy" id="79929"/>
    <lineage>
        <taxon>Archaea</taxon>
        <taxon>Methanobacteriati</taxon>
        <taxon>Methanobacteriota</taxon>
        <taxon>Methanomada group</taxon>
        <taxon>Methanobacteria</taxon>
        <taxon>Methanobacteriales</taxon>
        <taxon>Methanobacteriaceae</taxon>
        <taxon>Methanothermobacter</taxon>
    </lineage>
</organism>